<feature type="initiator methionine" description="Removed" evidence="1">
    <location>
        <position position="1"/>
    </location>
</feature>
<feature type="chain" id="PRO_0000153535" description="Small ribosomal subunit protein eS1">
    <location>
        <begin position="2"/>
        <end position="260"/>
    </location>
</feature>
<feature type="region of interest" description="Disordered" evidence="2">
    <location>
        <begin position="1"/>
        <end position="22"/>
    </location>
</feature>
<feature type="compositionally biased region" description="Basic residues" evidence="2">
    <location>
        <begin position="1"/>
        <end position="18"/>
    </location>
</feature>
<dbReference type="EMBL" id="L31645">
    <property type="protein sequence ID" value="AAA80978.1"/>
    <property type="molecule type" value="mRNA"/>
</dbReference>
<dbReference type="PIR" id="T09301">
    <property type="entry name" value="T09301"/>
</dbReference>
<dbReference type="SMR" id="P49198"/>
<dbReference type="GO" id="GO:0022627">
    <property type="term" value="C:cytosolic small ribosomal subunit"/>
    <property type="evidence" value="ECO:0007669"/>
    <property type="project" value="UniProtKB-UniRule"/>
</dbReference>
<dbReference type="GO" id="GO:0003735">
    <property type="term" value="F:structural constituent of ribosome"/>
    <property type="evidence" value="ECO:0007669"/>
    <property type="project" value="UniProtKB-UniRule"/>
</dbReference>
<dbReference type="GO" id="GO:0006412">
    <property type="term" value="P:translation"/>
    <property type="evidence" value="ECO:0007669"/>
    <property type="project" value="UniProtKB-UniRule"/>
</dbReference>
<dbReference type="HAMAP" id="MF_03122">
    <property type="entry name" value="Ribosomal_eS1_euk"/>
    <property type="match status" value="1"/>
</dbReference>
<dbReference type="InterPro" id="IPR001593">
    <property type="entry name" value="Ribosomal_eS1"/>
</dbReference>
<dbReference type="InterPro" id="IPR018281">
    <property type="entry name" value="Ribosomal_eS1_CS"/>
</dbReference>
<dbReference type="InterPro" id="IPR027500">
    <property type="entry name" value="Ribosomal_eS1_euk"/>
</dbReference>
<dbReference type="PANTHER" id="PTHR11830">
    <property type="entry name" value="40S RIBOSOMAL PROTEIN S3A"/>
    <property type="match status" value="1"/>
</dbReference>
<dbReference type="Pfam" id="PF01015">
    <property type="entry name" value="Ribosomal_S3Ae"/>
    <property type="match status" value="1"/>
</dbReference>
<dbReference type="SMART" id="SM01397">
    <property type="entry name" value="Ribosomal_S3Ae"/>
    <property type="match status" value="1"/>
</dbReference>
<dbReference type="PROSITE" id="PS01191">
    <property type="entry name" value="RIBOSOMAL_S3AE"/>
    <property type="match status" value="1"/>
</dbReference>
<sequence length="260" mass="29576">MAVGKNKRISKGKKGGKKKAADPFSKKDWYDIKAPSLFITRNVGKTLVTRTQGTKIASEGLKHRVFEVSLADLQNDEDHSYRKIRLRAEDVQGKNVLTNFWGMDVTTDKLRSLVKKWQSLIEAHVDVKTTDNFTLRMFCIGFTKKRANQVKRTCYAQSSQIKQIRRKMREIMVTQAQTCDLKELVQKFIPESIGREIEKATSSIYPLQNVFIRKVKILKAPKFDIGKLMEVHGDYSEDVGVKLDRPAEEAAPEATEVIGA</sequence>
<proteinExistence type="evidence at transcript level"/>
<reference key="1">
    <citation type="online journal article" date="1995" name="Plant Gene Register">
        <title>A cDNA clone homologous to human ribosomal protein S3a from sunflower (Helianthus annuus) seedlings.</title>
        <authorList>
            <person name="Liu J.-H."/>
            <person name="Reid D.M."/>
        </authorList>
        <locator>PGR95-050</locator>
    </citation>
    <scope>NUCLEOTIDE SEQUENCE [MRNA]</scope>
    <source>
        <strain>cv. Dahlgren 131</strain>
        <tissue>Hypocotyl</tissue>
    </source>
</reference>
<gene>
    <name evidence="1" type="primary">RPS3A</name>
</gene>
<keyword id="KW-0963">Cytoplasm</keyword>
<keyword id="KW-0687">Ribonucleoprotein</keyword>
<keyword id="KW-0689">Ribosomal protein</keyword>
<organism>
    <name type="scientific">Helianthus annuus</name>
    <name type="common">Common sunflower</name>
    <dbReference type="NCBI Taxonomy" id="4232"/>
    <lineage>
        <taxon>Eukaryota</taxon>
        <taxon>Viridiplantae</taxon>
        <taxon>Streptophyta</taxon>
        <taxon>Embryophyta</taxon>
        <taxon>Tracheophyta</taxon>
        <taxon>Spermatophyta</taxon>
        <taxon>Magnoliopsida</taxon>
        <taxon>eudicotyledons</taxon>
        <taxon>Gunneridae</taxon>
        <taxon>Pentapetalae</taxon>
        <taxon>asterids</taxon>
        <taxon>campanulids</taxon>
        <taxon>Asterales</taxon>
        <taxon>Asteraceae</taxon>
        <taxon>Asteroideae</taxon>
        <taxon>Heliantheae alliance</taxon>
        <taxon>Heliantheae</taxon>
        <taxon>Helianthus</taxon>
    </lineage>
</organism>
<comment type="subunit">
    <text evidence="1">Component of the small ribosomal subunit. Mature ribosomes consist of a small (40S) and a large (60S) subunit. The 40S subunit contains about 33 different proteins and 1 molecule of RNA (18S). The 60S subunit contains about 49 different proteins and 3 molecules of RNA (25S, 5.8S and 5S).</text>
</comment>
<comment type="subcellular location">
    <subcellularLocation>
        <location evidence="1">Cytoplasm</location>
    </subcellularLocation>
</comment>
<comment type="similarity">
    <text evidence="1">Belongs to the eukaryotic ribosomal protein eS1 family.</text>
</comment>
<accession>P49198</accession>
<evidence type="ECO:0000255" key="1">
    <source>
        <dbReference type="HAMAP-Rule" id="MF_03122"/>
    </source>
</evidence>
<evidence type="ECO:0000256" key="2">
    <source>
        <dbReference type="SAM" id="MobiDB-lite"/>
    </source>
</evidence>
<evidence type="ECO:0000305" key="3"/>
<name>RS3A_HELAN</name>
<protein>
    <recommendedName>
        <fullName evidence="1">Small ribosomal subunit protein eS1</fullName>
    </recommendedName>
    <alternativeName>
        <fullName evidence="3">40S ribosomal protein S3a</fullName>
    </alternativeName>
</protein>